<accession>Q45746</accession>
<keyword id="KW-0749">Sporulation</keyword>
<keyword id="KW-0800">Toxin</keyword>
<keyword id="KW-0843">Virulence</keyword>
<organism>
    <name type="scientific">Bacillus thuringiensis</name>
    <dbReference type="NCBI Taxonomy" id="1428"/>
    <lineage>
        <taxon>Bacteria</taxon>
        <taxon>Bacillati</taxon>
        <taxon>Bacillota</taxon>
        <taxon>Bacilli</taxon>
        <taxon>Bacillales</taxon>
        <taxon>Bacillaceae</taxon>
        <taxon>Bacillus</taxon>
        <taxon>Bacillus cereus group</taxon>
    </lineage>
</organism>
<proteinExistence type="evidence at transcript level"/>
<dbReference type="EMBL" id="Z22510">
    <property type="protein sequence ID" value="CAA80233.1"/>
    <property type="molecule type" value="Genomic_DNA"/>
</dbReference>
<dbReference type="PIR" id="S32645">
    <property type="entry name" value="S32645"/>
</dbReference>
<dbReference type="RefSeq" id="WP_033698569.1">
    <property type="nucleotide sequence ID" value="NZ_KK088289.1"/>
</dbReference>
<dbReference type="SMR" id="Q45746"/>
<dbReference type="PATRIC" id="fig|1428.310.peg.1216"/>
<dbReference type="GO" id="GO:0005102">
    <property type="term" value="F:signaling receptor binding"/>
    <property type="evidence" value="ECO:0007669"/>
    <property type="project" value="InterPro"/>
</dbReference>
<dbReference type="GO" id="GO:0090729">
    <property type="term" value="F:toxin activity"/>
    <property type="evidence" value="ECO:0007669"/>
    <property type="project" value="UniProtKB-KW"/>
</dbReference>
<dbReference type="GO" id="GO:0030435">
    <property type="term" value="P:sporulation resulting in formation of a cellular spore"/>
    <property type="evidence" value="ECO:0007669"/>
    <property type="project" value="UniProtKB-KW"/>
</dbReference>
<dbReference type="GO" id="GO:0001907">
    <property type="term" value="P:symbiont-mediated killing of host cell"/>
    <property type="evidence" value="ECO:0007669"/>
    <property type="project" value="InterPro"/>
</dbReference>
<dbReference type="CDD" id="cd04085">
    <property type="entry name" value="delta_endotoxin_C"/>
    <property type="match status" value="1"/>
</dbReference>
<dbReference type="Gene3D" id="2.60.120.260">
    <property type="entry name" value="Galactose-binding domain-like"/>
    <property type="match status" value="1"/>
</dbReference>
<dbReference type="Gene3D" id="2.100.10.10">
    <property type="entry name" value="Pesticidal crystal protein, central domain"/>
    <property type="match status" value="1"/>
</dbReference>
<dbReference type="Gene3D" id="1.20.190.10">
    <property type="entry name" value="Pesticidal crystal protein, N-terminal domain"/>
    <property type="match status" value="1"/>
</dbReference>
<dbReference type="InterPro" id="IPR048645">
    <property type="entry name" value="Cry1Ac-like_dom-VII"/>
</dbReference>
<dbReference type="InterPro" id="IPR041587">
    <property type="entry name" value="Cry_V"/>
</dbReference>
<dbReference type="InterPro" id="IPR008979">
    <property type="entry name" value="Galactose-bd-like_sf"/>
</dbReference>
<dbReference type="InterPro" id="IPR038979">
    <property type="entry name" value="Pest_crys"/>
</dbReference>
<dbReference type="InterPro" id="IPR054544">
    <property type="entry name" value="Pest_crys_Cry1Aa_dom-IV"/>
</dbReference>
<dbReference type="InterPro" id="IPR005638">
    <property type="entry name" value="Pest_crys_dom-III"/>
</dbReference>
<dbReference type="InterPro" id="IPR005639">
    <property type="entry name" value="Pest_crys_dom_I"/>
</dbReference>
<dbReference type="InterPro" id="IPR036716">
    <property type="entry name" value="Pest_crys_N_sf"/>
</dbReference>
<dbReference type="InterPro" id="IPR036399">
    <property type="entry name" value="Pest_cryst_cen_dom_sf"/>
</dbReference>
<dbReference type="InterPro" id="IPR001178">
    <property type="entry name" value="Pest_cryst_dom_II"/>
</dbReference>
<dbReference type="PANTHER" id="PTHR37003">
    <property type="entry name" value="ENDOTOXIN_N DOMAIN-CONTAINING PROTEIN-RELATED"/>
    <property type="match status" value="1"/>
</dbReference>
<dbReference type="PANTHER" id="PTHR37003:SF2">
    <property type="entry name" value="PESTICIDAL CRYSTAL PROTEIN N-TERMINAL DOMAIN-CONTAINING PROTEIN"/>
    <property type="match status" value="1"/>
</dbReference>
<dbReference type="Pfam" id="PF17997">
    <property type="entry name" value="Cry1Ac_D5"/>
    <property type="match status" value="1"/>
</dbReference>
<dbReference type="Pfam" id="PF21463">
    <property type="entry name" value="Cry1Ac_dom-VII"/>
    <property type="match status" value="1"/>
</dbReference>
<dbReference type="Pfam" id="PF03944">
    <property type="entry name" value="Endotoxin_C"/>
    <property type="match status" value="1"/>
</dbReference>
<dbReference type="Pfam" id="PF18449">
    <property type="entry name" value="Endotoxin_C2"/>
    <property type="match status" value="1"/>
</dbReference>
<dbReference type="Pfam" id="PF00555">
    <property type="entry name" value="Endotoxin_M"/>
    <property type="match status" value="1"/>
</dbReference>
<dbReference type="Pfam" id="PF03945">
    <property type="entry name" value="Endotoxin_N"/>
    <property type="match status" value="1"/>
</dbReference>
<dbReference type="SUPFAM" id="SSF51096">
    <property type="entry name" value="delta-Endotoxin (insectocide), middle domain"/>
    <property type="match status" value="1"/>
</dbReference>
<dbReference type="SUPFAM" id="SSF56849">
    <property type="entry name" value="delta-Endotoxin (insectocide), N-terminal domain"/>
    <property type="match status" value="1"/>
</dbReference>
<dbReference type="SUPFAM" id="SSF49785">
    <property type="entry name" value="Galactose-binding domain-like"/>
    <property type="match status" value="1"/>
</dbReference>
<gene>
    <name type="primary">cry1Ga</name>
    <name type="synonym">cryIG(a)</name>
</gene>
<protein>
    <recommendedName>
        <fullName>Pesticidal crystal protein Cry1Ga</fullName>
    </recommendedName>
    <alternativeName>
        <fullName>132 kDa crystal protein</fullName>
    </alternativeName>
    <alternativeName>
        <fullName>Crystaline entomocidal protoxin</fullName>
    </alternativeName>
    <alternativeName>
        <fullName>Insecticidal delta-endotoxin CryIG(a)</fullName>
    </alternativeName>
</protein>
<evidence type="ECO:0000305" key="1"/>
<reference key="1">
    <citation type="submission" date="1993-04" db="EMBL/GenBank/DDBJ databases">
        <authorList>
            <person name="Lambert B."/>
        </authorList>
    </citation>
    <scope>NUCLEOTIDE SEQUENCE [GENOMIC DNA]</scope>
    <source>
        <strain>BTS00349A</strain>
    </source>
</reference>
<name>CR1GA_BACTU</name>
<sequence>MEISDQNQYIPYNCLNNPESEIFNARNSNFGLVSQVSSGLTRFLLEAAVPEAGFALGLFDIIWGALGVDQWSLFLRQIEQLIRQEITELERNRATAILTGLSSSYNLYVEALREWENDPNNPASQERVRTRFRLTDDAIVTGLPTLAIRNLEVVNLSVYTQAANLHLSLLRDAVYFGERWGLTQANIEDLYTRLTSNIQEYSDHCARWYNQGLNEIGGISRRYLDFQRDLTISVLDIVALFPNYDIRTYPIPTQSQLTREIYTSPVVAGNINFGLSIANVLRAPHLMDFIDRIVIYTNSVRSTPYWAGHEVISRRTGQGQGNEIRFPLYGVAANAEPPVTIRPTGFTDEQRQWYRARSRVVSFRSSGQDFSLVDAVGFLTIFSAVSIYRNGFGFNTDTIDEIPIEGTDPFTGYSHRLCHVGFLASSPFISQYARAPIFSWTHRSATLTNTIAPDVITQIPLVKAFNLHSGATIVKGPGFTGGDILRRTNVGSFGDMRVNITAPLSQRYRVRIRYASTTDLQFYTNINGTTINIGNFSSTMDSGDDLQYGRFRVAGFTTPFTFSDANSTFTIGAFGFSPNNEVYIDRIEFVPAEVTFEAEYDLEKAQKAVNALFTSSNQIGLKTDVTDYHIDKVSNLVECLSDEFCLDEKRELSEKVKHAKRLSDERNLLQDPNFRGINRQPDRGWRGSTDITIQGGDDVFKENYVTLPGTFDGCYPTYLYQKIDESKLKVYTRYQLRGYIEDSQDLEIYLIRYNAKHETVNVPGTGSLWPLSAQSPIGKCGEPNRCAPHLEWNPDLDCSCRNGEKCAHHSHHFSLDIDVGCTDLNEDLGVWVIFKIKTQDGHARLGNLEFLEEKPLLGEALARVKRAEKKWRDKREKLELETNIVYKEAKESVDALFVNSQYDQLQADTNIAMIHAADKRVHSIREAYLPELSVIPGVNAAIFEELEGRIFTAFSLYDARNVIKNGDFNNGLSCWNVKGHVDVEEQNNHRSVLVVPEWEAEVSQEVRVCPGRGYILRVTAYKEGYGEGCVTIHEIENNTDELKFSNCVEEEVYPNNTVTCNDYTANQEEYKGAYTSHNRGYDEAYGNNPSVPADYTPVYEEKAYTDGRRENPCESNRGYGDYTPLPAGYVTKELEYFPETDKVWIEIGETEGTFIVESVELLLMEE</sequence>
<comment type="function">
    <text>Promotes colloidosmotic lysis by binding to the midgut epithelial cells of insects.</text>
</comment>
<comment type="developmental stage">
    <text>The crystal protein is produced during sporulation and is accumulated both as an inclusion and as part of the spore coat.</text>
</comment>
<comment type="miscellaneous">
    <text>Toxic segment of the protein is located in the N-terminus.</text>
</comment>
<comment type="similarity">
    <text evidence="1">Belongs to the delta endotoxin family.</text>
</comment>
<feature type="chain" id="PRO_0000174044" description="Pesticidal crystal protein Cry1Ga">
    <location>
        <begin position="1"/>
        <end position="1166"/>
    </location>
</feature>